<dbReference type="EMBL" id="AM720593">
    <property type="status" value="NOT_ANNOTATED_CDS"/>
    <property type="molecule type" value="mRNA"/>
</dbReference>
<dbReference type="RefSeq" id="NP_001412406.1">
    <property type="nucleotide sequence ID" value="NM_001425477.1"/>
</dbReference>
<dbReference type="RefSeq" id="XP_008462597.1">
    <property type="nucleotide sequence ID" value="XM_008464375.2"/>
</dbReference>
<dbReference type="FunCoup" id="P0DI61">
    <property type="interactions" value="252"/>
</dbReference>
<dbReference type="EnsemblPlants" id="MELO3C024564.2.1">
    <property type="protein sequence ID" value="MELO3C024564.2.1"/>
    <property type="gene ID" value="MELO3C024564.2"/>
</dbReference>
<dbReference type="GeneID" id="103500916"/>
<dbReference type="Gramene" id="MELO3C024564.2.1">
    <property type="protein sequence ID" value="MELO3C024564.2.1"/>
    <property type="gene ID" value="MELO3C024564.2"/>
</dbReference>
<dbReference type="KEGG" id="cmo:103500916"/>
<dbReference type="eggNOG" id="ENOG502RYTF">
    <property type="taxonomic scope" value="Eukaryota"/>
</dbReference>
<dbReference type="InParanoid" id="P0DI61"/>
<dbReference type="PhylomeDB" id="P0DI61"/>
<dbReference type="Proteomes" id="UP000089565">
    <property type="component" value="Unplaced"/>
</dbReference>
<dbReference type="Proteomes" id="UP000596662">
    <property type="component" value="Unplaced"/>
</dbReference>
<dbReference type="GO" id="GO:0005886">
    <property type="term" value="C:plasma membrane"/>
    <property type="evidence" value="ECO:0007669"/>
    <property type="project" value="UniProtKB-SubCell"/>
</dbReference>
<dbReference type="GO" id="GO:0071555">
    <property type="term" value="P:cell wall organization"/>
    <property type="evidence" value="ECO:0007669"/>
    <property type="project" value="UniProtKB-KW"/>
</dbReference>
<dbReference type="InterPro" id="IPR006459">
    <property type="entry name" value="CASP/CASPL"/>
</dbReference>
<dbReference type="InterPro" id="IPR006702">
    <property type="entry name" value="CASP_dom"/>
</dbReference>
<dbReference type="InterPro" id="IPR044173">
    <property type="entry name" value="CASPL"/>
</dbReference>
<dbReference type="NCBIfam" id="TIGR01569">
    <property type="entry name" value="A_tha_TIGR01569"/>
    <property type="match status" value="1"/>
</dbReference>
<dbReference type="PANTHER" id="PTHR36488:SF11">
    <property type="entry name" value="CASP-LIKE PROTEIN"/>
    <property type="match status" value="1"/>
</dbReference>
<dbReference type="PANTHER" id="PTHR36488">
    <property type="entry name" value="CASP-LIKE PROTEIN 1U1"/>
    <property type="match status" value="1"/>
</dbReference>
<dbReference type="Pfam" id="PF04535">
    <property type="entry name" value="CASP_dom"/>
    <property type="match status" value="1"/>
</dbReference>
<keyword id="KW-1003">Cell membrane</keyword>
<keyword id="KW-0961">Cell wall biogenesis/degradation</keyword>
<keyword id="KW-0325">Glycoprotein</keyword>
<keyword id="KW-0472">Membrane</keyword>
<keyword id="KW-1185">Reference proteome</keyword>
<keyword id="KW-0812">Transmembrane</keyword>
<keyword id="KW-1133">Transmembrane helix</keyword>
<comment type="function">
    <text evidence="1">Regulates membrane-cell wall junctions and localized cell wall deposition. Required for establishment of the Casparian strip membrane domain (CSD) and the subsequent formation of Casparian strips, a cell wall modification of the root endodermis that determines an apoplastic barrier between the intraorganismal apoplasm and the extraorganismal apoplasm and prevents lateral diffusion (By similarity).</text>
</comment>
<comment type="subunit">
    <text evidence="1">Homodimer and heterodimers.</text>
</comment>
<comment type="subcellular location">
    <subcellularLocation>
        <location evidence="1">Cell membrane</location>
        <topology evidence="1">Multi-pass membrane protein</topology>
    </subcellularLocation>
    <text evidence="1">Very restricted localization following a belt shape within the plasma membrane which coincides with the position of the Casparian strip membrane domain in the root endodermis.</text>
</comment>
<comment type="similarity">
    <text evidence="4">Belongs to the Casparian strip membrane proteins (CASP) family.</text>
</comment>
<organism>
    <name type="scientific">Cucumis melo</name>
    <name type="common">Muskmelon</name>
    <dbReference type="NCBI Taxonomy" id="3656"/>
    <lineage>
        <taxon>Eukaryota</taxon>
        <taxon>Viridiplantae</taxon>
        <taxon>Streptophyta</taxon>
        <taxon>Embryophyta</taxon>
        <taxon>Tracheophyta</taxon>
        <taxon>Spermatophyta</taxon>
        <taxon>Magnoliopsida</taxon>
        <taxon>eudicotyledons</taxon>
        <taxon>Gunneridae</taxon>
        <taxon>Pentapetalae</taxon>
        <taxon>rosids</taxon>
        <taxon>fabids</taxon>
        <taxon>Cucurbitales</taxon>
        <taxon>Cucurbitaceae</taxon>
        <taxon>Benincaseae</taxon>
        <taxon>Cucumis</taxon>
    </lineage>
</organism>
<feature type="chain" id="PRO_0000417765" description="Casparian strip membrane protein 1">
    <location>
        <begin position="1"/>
        <end position="209"/>
    </location>
</feature>
<feature type="topological domain" description="Cytoplasmic" evidence="2">
    <location>
        <begin position="1"/>
        <end position="46"/>
    </location>
</feature>
<feature type="transmembrane region" description="Helical" evidence="2">
    <location>
        <begin position="47"/>
        <end position="67"/>
    </location>
</feature>
<feature type="topological domain" description="Extracellular" evidence="2">
    <location>
        <begin position="68"/>
        <end position="96"/>
    </location>
</feature>
<feature type="transmembrane region" description="Helical" evidence="2">
    <location>
        <begin position="97"/>
        <end position="117"/>
    </location>
</feature>
<feature type="topological domain" description="Cytoplasmic" evidence="2">
    <location>
        <begin position="118"/>
        <end position="129"/>
    </location>
</feature>
<feature type="transmembrane region" description="Helical" evidence="2">
    <location>
        <begin position="130"/>
        <end position="150"/>
    </location>
</feature>
<feature type="topological domain" description="Extracellular" evidence="2">
    <location>
        <begin position="151"/>
        <end position="182"/>
    </location>
</feature>
<feature type="transmembrane region" description="Helical" evidence="2">
    <location>
        <begin position="183"/>
        <end position="203"/>
    </location>
</feature>
<feature type="topological domain" description="Cytoplasmic" evidence="2">
    <location>
        <begin position="204"/>
        <end position="209"/>
    </location>
</feature>
<feature type="region of interest" description="Disordered" evidence="3">
    <location>
        <begin position="1"/>
        <end position="35"/>
    </location>
</feature>
<feature type="glycosylation site" description="N-linked (GlcNAc...) asparagine" evidence="2">
    <location>
        <position position="161"/>
    </location>
</feature>
<protein>
    <recommendedName>
        <fullName>Casparian strip membrane protein 1</fullName>
        <shortName>CmCASP1</shortName>
    </recommendedName>
</protein>
<evidence type="ECO:0000250" key="1"/>
<evidence type="ECO:0000255" key="2"/>
<evidence type="ECO:0000256" key="3">
    <source>
        <dbReference type="SAM" id="MobiDB-lite"/>
    </source>
</evidence>
<evidence type="ECO:0000305" key="4"/>
<accession>P0DI61</accession>
<reference key="1">
    <citation type="journal article" date="2007" name="BMC Genomics">
        <title>MELOGEN: an EST database for melon functional genomics.</title>
        <authorList>
            <person name="Gonzalez-Ibeas D."/>
            <person name="Blanca J."/>
            <person name="Roig C."/>
            <person name="Gonzalez-To M."/>
            <person name="Pico B."/>
            <person name="Truniger V."/>
            <person name="Gomez P."/>
            <person name="Deleu W."/>
            <person name="Cano-Delgado A."/>
            <person name="Arus P."/>
            <person name="Nuez F."/>
            <person name="Garcia-Mas J."/>
            <person name="Puigdomenech P."/>
            <person name="Aranda M.A."/>
        </authorList>
    </citation>
    <scope>NUCLEOTIDE SEQUENCE [LARGE SCALE MRNA]</scope>
    <source>
        <tissue>Root</tissue>
    </source>
</reference>
<reference key="2">
    <citation type="journal article" date="2014" name="Plant Physiol.">
        <title>Functional and evolutionary analysis of the CASPARIAN STRIP MEMBRANE DOMAIN PROTEIN family.</title>
        <authorList>
            <person name="Roppolo D."/>
            <person name="Boeckmann B."/>
            <person name="Pfister A."/>
            <person name="Boutet E."/>
            <person name="Rubio M.C."/>
            <person name="Denervaud-Tendon V."/>
            <person name="Vermeer J.E."/>
            <person name="Gheyselinck J."/>
            <person name="Xenarios I."/>
            <person name="Geldner N."/>
        </authorList>
    </citation>
    <scope>GENE FAMILY</scope>
    <scope>NOMENCLATURE</scope>
</reference>
<sequence length="209" mass="21861">MKTGESTAIDIAPETNNSGPIGKKKSTTPLLAAPVPDRGTHRMKRGLAIFDFVLRIGVLASALAAAAAMGTSEQTLPFFTQFFQFEASYDDLPTFQFFVVAMAVVAGYVVLSIPFSIVCIIRPHAAGPRVLLLILDSVALTLNTAAAGAAAAVVSLAHSGNSSTNWLAICNQFGDFCQQASGAVVGSFAAVLLFLLLILFSALSLKNSH</sequence>
<proteinExistence type="evidence at transcript level"/>
<name>CASP1_CUCME</name>